<proteinExistence type="inferred from homology"/>
<accession>Q7WC96</accession>
<feature type="chain" id="PRO_0000164376" description="Putative 5'(3')-deoxyribonucleotidase">
    <location>
        <begin position="1"/>
        <end position="186"/>
    </location>
</feature>
<sequence>MLILLDQNGVLADFEHAFIDAWRKRHPDIEPVAFEDRKSFHIREDYAPELRGLAEAIYTAPGFIRDLPPVPGAIEAFRELLALGMDVRICSSPLMQFENYVAEKYLWVERHLGREATQRLILTRDKTLVQGDLLIDDRPVITGAARPRWRHIIYDAPYNRDQTDRPRLDWRNWRNVLAGELYRSDA</sequence>
<evidence type="ECO:0000250" key="1">
    <source>
        <dbReference type="UniProtKB" id="Q97JQ5"/>
    </source>
</evidence>
<evidence type="ECO:0000305" key="2"/>
<gene>
    <name type="ordered locus">BPP0431</name>
</gene>
<comment type="function">
    <text evidence="2">Dephosphorylates the 5' and 2'(3')-phosphates of deoxyribonucleotides.</text>
</comment>
<comment type="cofactor">
    <cofactor evidence="1">
        <name>Mg(2+)</name>
        <dbReference type="ChEBI" id="CHEBI:18420"/>
    </cofactor>
</comment>
<comment type="similarity">
    <text evidence="2">Belongs to the 5'(3')-deoxyribonucleotidase family.</text>
</comment>
<protein>
    <recommendedName>
        <fullName>Putative 5'(3')-deoxyribonucleotidase</fullName>
        <ecNumber>3.1.3.-</ecNumber>
    </recommendedName>
</protein>
<keyword id="KW-0378">Hydrolase</keyword>
<keyword id="KW-0460">Magnesium</keyword>
<keyword id="KW-0479">Metal-binding</keyword>
<organism>
    <name type="scientific">Bordetella parapertussis (strain 12822 / ATCC BAA-587 / NCTC 13253)</name>
    <dbReference type="NCBI Taxonomy" id="257311"/>
    <lineage>
        <taxon>Bacteria</taxon>
        <taxon>Pseudomonadati</taxon>
        <taxon>Pseudomonadota</taxon>
        <taxon>Betaproteobacteria</taxon>
        <taxon>Burkholderiales</taxon>
        <taxon>Alcaligenaceae</taxon>
        <taxon>Bordetella</taxon>
    </lineage>
</organism>
<dbReference type="EC" id="3.1.3.-"/>
<dbReference type="EMBL" id="BX640424">
    <property type="protein sequence ID" value="CAE36015.1"/>
    <property type="molecule type" value="Genomic_DNA"/>
</dbReference>
<dbReference type="RefSeq" id="WP_010927471.1">
    <property type="nucleotide sequence ID" value="NC_002928.3"/>
</dbReference>
<dbReference type="SMR" id="Q7WC96"/>
<dbReference type="GeneID" id="93206665"/>
<dbReference type="KEGG" id="bpa:BPP0431"/>
<dbReference type="HOGENOM" id="CLU_100259_0_0_4"/>
<dbReference type="Proteomes" id="UP000001421">
    <property type="component" value="Chromosome"/>
</dbReference>
<dbReference type="GO" id="GO:0008253">
    <property type="term" value="F:5'-nucleotidase activity"/>
    <property type="evidence" value="ECO:0007669"/>
    <property type="project" value="InterPro"/>
</dbReference>
<dbReference type="GO" id="GO:0046872">
    <property type="term" value="F:metal ion binding"/>
    <property type="evidence" value="ECO:0007669"/>
    <property type="project" value="UniProtKB-KW"/>
</dbReference>
<dbReference type="GO" id="GO:0009223">
    <property type="term" value="P:pyrimidine deoxyribonucleotide catabolic process"/>
    <property type="evidence" value="ECO:0007669"/>
    <property type="project" value="TreeGrafter"/>
</dbReference>
<dbReference type="CDD" id="cd02587">
    <property type="entry name" value="HAD_5-3dNT"/>
    <property type="match status" value="1"/>
</dbReference>
<dbReference type="Gene3D" id="1.10.40.40">
    <property type="entry name" value="Deoxyribonucleotidase, domain 2"/>
    <property type="match status" value="1"/>
</dbReference>
<dbReference type="Gene3D" id="3.40.50.1000">
    <property type="entry name" value="HAD superfamily/HAD-like"/>
    <property type="match status" value="1"/>
</dbReference>
<dbReference type="InterPro" id="IPR010708">
    <property type="entry name" value="5'(3')-deoxyribonucleotidase"/>
</dbReference>
<dbReference type="InterPro" id="IPR036412">
    <property type="entry name" value="HAD-like_sf"/>
</dbReference>
<dbReference type="InterPro" id="IPR023214">
    <property type="entry name" value="HAD_sf"/>
</dbReference>
<dbReference type="PANTHER" id="PTHR16504">
    <property type="entry name" value="5'(3')-DEOXYRIBONUCLEOTIDASE"/>
    <property type="match status" value="1"/>
</dbReference>
<dbReference type="PANTHER" id="PTHR16504:SF4">
    <property type="entry name" value="5'(3')-DEOXYRIBONUCLEOTIDASE"/>
    <property type="match status" value="1"/>
</dbReference>
<dbReference type="Pfam" id="PF06941">
    <property type="entry name" value="NT5C"/>
    <property type="match status" value="1"/>
</dbReference>
<dbReference type="SUPFAM" id="SSF56784">
    <property type="entry name" value="HAD-like"/>
    <property type="match status" value="1"/>
</dbReference>
<name>53DR_BORPA</name>
<reference key="1">
    <citation type="journal article" date="2003" name="Nat. Genet.">
        <title>Comparative analysis of the genome sequences of Bordetella pertussis, Bordetella parapertussis and Bordetella bronchiseptica.</title>
        <authorList>
            <person name="Parkhill J."/>
            <person name="Sebaihia M."/>
            <person name="Preston A."/>
            <person name="Murphy L.D."/>
            <person name="Thomson N.R."/>
            <person name="Harris D.E."/>
            <person name="Holden M.T.G."/>
            <person name="Churcher C.M."/>
            <person name="Bentley S.D."/>
            <person name="Mungall K.L."/>
            <person name="Cerdeno-Tarraga A.-M."/>
            <person name="Temple L."/>
            <person name="James K.D."/>
            <person name="Harris B."/>
            <person name="Quail M.A."/>
            <person name="Achtman M."/>
            <person name="Atkin R."/>
            <person name="Baker S."/>
            <person name="Basham D."/>
            <person name="Bason N."/>
            <person name="Cherevach I."/>
            <person name="Chillingworth T."/>
            <person name="Collins M."/>
            <person name="Cronin A."/>
            <person name="Davis P."/>
            <person name="Doggett J."/>
            <person name="Feltwell T."/>
            <person name="Goble A."/>
            <person name="Hamlin N."/>
            <person name="Hauser H."/>
            <person name="Holroyd S."/>
            <person name="Jagels K."/>
            <person name="Leather S."/>
            <person name="Moule S."/>
            <person name="Norberczak H."/>
            <person name="O'Neil S."/>
            <person name="Ormond D."/>
            <person name="Price C."/>
            <person name="Rabbinowitsch E."/>
            <person name="Rutter S."/>
            <person name="Sanders M."/>
            <person name="Saunders D."/>
            <person name="Seeger K."/>
            <person name="Sharp S."/>
            <person name="Simmonds M."/>
            <person name="Skelton J."/>
            <person name="Squares R."/>
            <person name="Squares S."/>
            <person name="Stevens K."/>
            <person name="Unwin L."/>
            <person name="Whitehead S."/>
            <person name="Barrell B.G."/>
            <person name="Maskell D.J."/>
        </authorList>
    </citation>
    <scope>NUCLEOTIDE SEQUENCE [LARGE SCALE GENOMIC DNA]</scope>
    <source>
        <strain>12822 / ATCC BAA-587 / NCTC 13253</strain>
    </source>
</reference>